<proteinExistence type="evidence at protein level"/>
<name>HBSAG_WHV5</name>
<keyword id="KW-0002">3D-structure</keyword>
<keyword id="KW-0007">Acetylation</keyword>
<keyword id="KW-0024">Alternative initiation</keyword>
<keyword id="KW-0025">Alternative splicing</keyword>
<keyword id="KW-1166">Caveolin-mediated endocytosis of virus by host</keyword>
<keyword id="KW-1170">Fusion of virus membrane with host endosomal membrane</keyword>
<keyword id="KW-1168">Fusion of virus membrane with host membrane</keyword>
<keyword id="KW-0325">Glycoprotein</keyword>
<keyword id="KW-0945">Host-virus interaction</keyword>
<keyword id="KW-0449">Lipoprotein</keyword>
<keyword id="KW-0472">Membrane</keyword>
<keyword id="KW-0519">Myristate</keyword>
<keyword id="KW-1185">Reference proteome</keyword>
<keyword id="KW-0812">Transmembrane</keyword>
<keyword id="KW-1133">Transmembrane helix</keyword>
<keyword id="KW-1161">Viral attachment to host cell</keyword>
<keyword id="KW-0261">Viral envelope protein</keyword>
<keyword id="KW-1162">Viral penetration into host cytoplasm</keyword>
<keyword id="KW-0946">Virion</keyword>
<keyword id="KW-1164">Virus endocytosis by host</keyword>
<keyword id="KW-1160">Virus entry into host cell</keyword>
<organismHost>
    <name type="scientific">Marmota monax</name>
    <name type="common">Woodchuck</name>
    <dbReference type="NCBI Taxonomy" id="9995"/>
</organismHost>
<feature type="initiator methionine" description="Removed; by host" evidence="3">
    <location>
        <position position="1"/>
    </location>
</feature>
<feature type="chain" id="PRO_0000038121" description="Large envelope protein" evidence="3">
    <location>
        <begin position="2"/>
        <end position="431"/>
    </location>
</feature>
<feature type="topological domain" description="Intravirion; in internal conformation" evidence="3">
    <location>
        <begin position="2"/>
        <end position="286"/>
    </location>
</feature>
<feature type="topological domain" description="Virion surface; in external conformation" evidence="3">
    <location>
        <begin position="2"/>
        <end position="214"/>
    </location>
</feature>
<feature type="transmembrane region" description="Helical; Name=TM1; Note=In external conformation" evidence="3">
    <location>
        <begin position="215"/>
        <end position="235"/>
    </location>
</feature>
<feature type="topological domain" description="Intravirion; in external conformation" evidence="3">
    <location>
        <begin position="236"/>
        <end position="286"/>
    </location>
</feature>
<feature type="transmembrane region" description="Helical; Name=TM2" evidence="3">
    <location>
        <begin position="287"/>
        <end position="307"/>
    </location>
</feature>
<feature type="topological domain" description="Virion surface" evidence="3">
    <location>
        <begin position="308"/>
        <end position="379"/>
    </location>
</feature>
<feature type="transmembrane region" description="Helical" evidence="3">
    <location>
        <begin position="380"/>
        <end position="400"/>
    </location>
</feature>
<feature type="topological domain" description="Intravirion" evidence="3">
    <location>
        <begin position="401"/>
        <end position="406"/>
    </location>
</feature>
<feature type="transmembrane region" description="Helical; Name=TM3" evidence="3">
    <location>
        <begin position="407"/>
        <end position="429"/>
    </location>
</feature>
<feature type="topological domain" description="Virion surface" evidence="3">
    <location>
        <begin position="430"/>
        <end position="431"/>
    </location>
</feature>
<feature type="region of interest" description="Pre-S" evidence="3">
    <location>
        <begin position="2"/>
        <end position="207"/>
    </location>
</feature>
<feature type="region of interest" description="Pre-S1" evidence="3">
    <location>
        <begin position="2"/>
        <end position="148"/>
    </location>
</feature>
<feature type="region of interest" description="Disordered" evidence="4">
    <location>
        <begin position="115"/>
        <end position="147"/>
    </location>
</feature>
<feature type="region of interest" description="Pre-S2" evidence="3">
    <location>
        <begin position="149"/>
        <end position="207"/>
    </location>
</feature>
<feature type="lipid moiety-binding region" description="N-myristoyl glycine; by host" evidence="3">
    <location>
        <position position="2"/>
    </location>
</feature>
<feature type="glycosylation site" description="N-linked (GlcNAc...) asparagine; by host" evidence="3">
    <location>
        <position position="351"/>
    </location>
</feature>
<feature type="splice variant" id="VSP_031458" description="In isoform S." evidence="5">
    <location>
        <begin position="1"/>
        <end position="209"/>
    </location>
</feature>
<feature type="splice variant" id="VSP_031459" description="In isoform M." evidence="5">
    <location>
        <begin position="1"/>
        <end position="149"/>
    </location>
</feature>
<feature type="glycosylation site" description="N-linked (GlcNAc...) asparagine" evidence="1">
    <location sequence="P17400-2">
        <position position="3"/>
    </location>
</feature>
<accession>P17400</accession>
<gene>
    <name evidence="3" type="primary">S</name>
</gene>
<organism>
    <name type="scientific">Woodchuck hepatitis B virus (isolate 8)</name>
    <name type="common">WHV</name>
    <dbReference type="NCBI Taxonomy" id="10433"/>
    <lineage>
        <taxon>Viruses</taxon>
        <taxon>Riboviria</taxon>
        <taxon>Pararnavirae</taxon>
        <taxon>Artverviricota</taxon>
        <taxon>Revtraviricetes</taxon>
        <taxon>Blubervirales</taxon>
        <taxon>Hepadnaviridae</taxon>
        <taxon>Orthohepadnavirus</taxon>
        <taxon>Woodchuck hepatitis virus</taxon>
    </lineage>
</organism>
<evidence type="ECO:0000250" key="1">
    <source>
        <dbReference type="UniProtKB" id="P03138"/>
    </source>
</evidence>
<evidence type="ECO:0000250" key="2">
    <source>
        <dbReference type="UniProtKB" id="P03141"/>
    </source>
</evidence>
<evidence type="ECO:0000255" key="3">
    <source>
        <dbReference type="HAMAP-Rule" id="MF_04075"/>
    </source>
</evidence>
<evidence type="ECO:0000256" key="4">
    <source>
        <dbReference type="SAM" id="MobiDB-lite"/>
    </source>
</evidence>
<evidence type="ECO:0000305" key="5"/>
<reference key="1">
    <citation type="journal article" date="1989" name="Proc. Natl. Acad. Sci. U.S.A.">
        <title>Complete nucleotide sequence of a molecular clone of woodchuck hepatitis virus that is infectious in the natural host.</title>
        <authorList>
            <person name="Girones R."/>
            <person name="Cote P.J."/>
            <person name="Hornbuckle W.E."/>
            <person name="Tennant B.C."/>
            <person name="Gerin J.L."/>
            <person name="Purcell R.H."/>
            <person name="Miller R.H."/>
        </authorList>
    </citation>
    <scope>NUCLEOTIDE SEQUENCE [GENOMIC DNA]</scope>
    <source>
        <strain>Infectious clone</strain>
    </source>
</reference>
<reference key="2">
    <citation type="journal article" date="1996" name="Intervirology">
        <title>Functions of the large hepatitis B virus surface protein in viral particle morphogenesis.</title>
        <authorList>
            <person name="Bruss V."/>
            <person name="Gerhardt E."/>
            <person name="Vieluf K."/>
            <person name="Wunderlich G."/>
        </authorList>
    </citation>
    <scope>REVIEW</scope>
</reference>
<reference key="3">
    <citation type="journal article" date="1998" name="Adv. Exp. Med. Biol.">
        <title>Role of glycan processing in hepatitis B virus envelope protein trafficking.</title>
        <authorList>
            <person name="Block T.M."/>
            <person name="Lu X."/>
            <person name="Mehta A."/>
            <person name="Park J."/>
            <person name="Blumberg B.S."/>
            <person name="Dwek R."/>
        </authorList>
    </citation>
    <scope>REVIEW</scope>
</reference>
<reference key="4">
    <citation type="journal article" date="2004" name="Virus Res.">
        <title>Envelopment of the hepatitis B virus nucleocapsid.</title>
        <authorList>
            <person name="Bruss V."/>
        </authorList>
    </citation>
    <scope>REVIEW</scope>
</reference>
<reference key="5">
    <citation type="journal article" date="2006" name="Cancer Sci.">
        <title>Hepatitis B virus pre-S mutants, endoplasmic reticulum stress and hepatocarcinogenesis.</title>
        <authorList>
            <person name="Wang H.C."/>
            <person name="Huang W."/>
            <person name="Lai M.D."/>
            <person name="Su I.J."/>
        </authorList>
    </citation>
    <scope>REVIEW</scope>
</reference>
<protein>
    <recommendedName>
        <fullName evidence="3">Large envelope protein</fullName>
    </recommendedName>
    <alternativeName>
        <fullName evidence="3">L glycoprotein</fullName>
    </alternativeName>
    <alternativeName>
        <fullName evidence="3">L-HBsAg</fullName>
        <shortName evidence="3">LHB</shortName>
    </alternativeName>
    <alternativeName>
        <fullName evidence="3">Large S protein</fullName>
    </alternativeName>
    <alternativeName>
        <fullName evidence="3">Large surface protein</fullName>
    </alternativeName>
    <alternativeName>
        <fullName evidence="3">Major surface antigen</fullName>
    </alternativeName>
</protein>
<dbReference type="EMBL" id="J04514">
    <property type="protein sequence ID" value="AAA46770.1"/>
    <property type="status" value="ALT_INIT"/>
    <property type="molecule type" value="Genomic_DNA"/>
</dbReference>
<dbReference type="PIR" id="B32397">
    <property type="entry name" value="SAVLW8"/>
</dbReference>
<dbReference type="PDB" id="7TUL">
    <property type="method" value="EM"/>
    <property type="resolution" value="6.50 A"/>
    <property type="chains" value="A/B=210-431"/>
</dbReference>
<dbReference type="PDBsum" id="7TUL"/>
<dbReference type="SMR" id="P17400"/>
<dbReference type="GlyCosmos" id="P17400">
    <property type="glycosylation" value="2 sites, No reported glycans"/>
</dbReference>
<dbReference type="Proteomes" id="UP000000287">
    <property type="component" value="Genome"/>
</dbReference>
<dbReference type="GO" id="GO:0016020">
    <property type="term" value="C:membrane"/>
    <property type="evidence" value="ECO:0007669"/>
    <property type="project" value="UniProtKB-UniRule"/>
</dbReference>
<dbReference type="GO" id="GO:0019031">
    <property type="term" value="C:viral envelope"/>
    <property type="evidence" value="ECO:0007669"/>
    <property type="project" value="UniProtKB-KW"/>
</dbReference>
<dbReference type="GO" id="GO:0055036">
    <property type="term" value="C:virion membrane"/>
    <property type="evidence" value="ECO:0007669"/>
    <property type="project" value="UniProtKB-SubCell"/>
</dbReference>
<dbReference type="GO" id="GO:0075513">
    <property type="term" value="P:caveolin-mediated endocytosis of virus by host cell"/>
    <property type="evidence" value="ECO:0007669"/>
    <property type="project" value="UniProtKB-KW"/>
</dbReference>
<dbReference type="GO" id="GO:0039654">
    <property type="term" value="P:fusion of virus membrane with host endosome membrane"/>
    <property type="evidence" value="ECO:0007669"/>
    <property type="project" value="UniProtKB-KW"/>
</dbReference>
<dbReference type="GO" id="GO:0019062">
    <property type="term" value="P:virion attachment to host cell"/>
    <property type="evidence" value="ECO:0007669"/>
    <property type="project" value="UniProtKB-UniRule"/>
</dbReference>
<dbReference type="HAMAP" id="MF_04075">
    <property type="entry name" value="HBV_HBSAG"/>
    <property type="match status" value="1"/>
</dbReference>
<dbReference type="InterPro" id="IPR000349">
    <property type="entry name" value="HBV_HBSAG"/>
</dbReference>
<dbReference type="Pfam" id="PF00695">
    <property type="entry name" value="vMSA"/>
    <property type="match status" value="1"/>
</dbReference>
<sequence>MGNNIKVTFNPDKIAAWWPAVGTYYTTTYPQNQSVFQPGIYQTTSLINPKNQQELDSVLINRYKQIDWNTWQGFPVDQKFSLVSRDPPPKPYINQSAQTFEIKPGPIIVPGIRDIPRGLVPPQTPTNRDQGRKPTPPTPPLRDTHPHLTMKNQTFHLQGFVDGLRDLTTTERQHNAYGDPFTTLSPAVPTVSTILSPPSTTGDPALSPEMSPSSLLGLLAGLQVVYFLWTKILTIAQNLDWWWTSLSFPGGIPECTGQNSQFQTCKHLPTSCPPTCNGFRWMYLRRFIIYLLVLLLCLIFLLVLLDWKGFIPVCPLQPTTETTVNCRQCTISAQDMYTPPYCCCLKPTAGNCTCWPIPSSWALGNYLWEWALARFSWLNLLVPLLQWLGGISLIAWFLLIWMIWFWGPALLSILPPFIPIFVLFFLIWVYI</sequence>
<comment type="function">
    <text evidence="3">The large envelope protein exists in two topological conformations, one which is termed 'external' or Le-HBsAg and the other 'internal' or Li-HBsAg. In its external conformation the protein attaches the virus to cell receptors and thereby initiating infection. This interaction determines the species specificity and liver tropism. This attachment induces virion internalization predominantly through caveolin-mediated endocytosis. The large envelope protein also assures fusion between virion membrane and endosomal membrane. In its internal conformation the protein plays a role in virion morphogenesis and mediates the contact with the nucleocapsid like a matrix protein.</text>
</comment>
<comment type="function">
    <text evidence="3">The middle envelope protein plays an important role in the budding of the virion. It is involved in the induction of budding in a nucleocapsid independent way. In this process the majority of envelope proteins bud to form subviral lipoprotein particles of 22 nm of diameter that do not contain a nucleocapsid.</text>
</comment>
<comment type="subunit">
    <molecule>Isoform L</molecule>
    <text evidence="2">In its internal form (Li-HBsAg), interacts with the capsid protein and with the isoform S. Interacts with host chaperone CANX.</text>
</comment>
<comment type="subunit">
    <molecule>Isoform M</molecule>
    <text evidence="2">Associates with host chaperone CANX through its pre-S2 N glycan; this association may be essential for isoform M proper secretion.</text>
</comment>
<comment type="subunit">
    <molecule>Isoform S</molecule>
    <text evidence="2">Interacts with isoform L. Interacts with the antigens of satellite virus HDV (HDVAgs); this interaction is required for encapsidation of HDV genomic RNA.</text>
</comment>
<comment type="subcellular location">
    <subcellularLocation>
        <location evidence="3">Virion membrane</location>
    </subcellularLocation>
</comment>
<comment type="alternative products">
    <event type="alternative splicing"/>
    <event type="alternative initiation"/>
    <isoform>
        <id>P17400-1</id>
        <name>L</name>
        <name>Large envelope protein</name>
        <name>LHB</name>
        <name>L-HBsAg</name>
        <sequence type="displayed"/>
    </isoform>
    <isoform>
        <id>P17400-2</id>
        <name>M</name>
        <name>Middle envelope protein</name>
        <name>MHB</name>
        <name>M-HBsAg</name>
        <sequence type="described" ref="VSP_031459"/>
    </isoform>
    <isoform>
        <id>P17400-3</id>
        <name>S</name>
        <name>Small envelope protein</name>
        <name>SHB</name>
        <name>S-HBsAg</name>
        <sequence type="described" ref="VSP_031458"/>
    </isoform>
</comment>
<comment type="domain">
    <text evidence="3">The large envelope protein is synthesized with the pre-S region at the cytosolic side of the endoplasmic reticulum and, hence will be within the virion after budding. Therefore the pre-S region is not N-glycosylated. Later a post-translational translocation of N-terminal pre-S and TM1 domains occur in about 50% of proteins at the virion surface. These molecules change their topology by an unknown mechanism, resulting in exposure of pre-S region at virion surface. For isoform M in contrast, the pre-S2 region is translocated cotranslationally to the endoplasmic reticulum lumen and is N-glycosylated.</text>
</comment>
<comment type="PTM">
    <text evidence="3">Isoform M is N-terminally acetylated by host at a ratio of 90%, and N-glycosylated by host at the pre-S2 region.</text>
</comment>
<comment type="PTM">
    <text evidence="3">Myristoylated.</text>
</comment>
<comment type="similarity">
    <text evidence="3">Belongs to the orthohepadnavirus major surface antigen family.</text>
</comment>
<comment type="sequence caution" evidence="5">
    <conflict type="erroneous initiation">
        <sequence resource="EMBL-CDS" id="AAA46770"/>
    </conflict>
</comment>